<keyword id="KW-0027">Amidation</keyword>
<keyword id="KW-0903">Direct protein sequencing</keyword>
<keyword id="KW-0527">Neuropeptide</keyword>
<keyword id="KW-0964">Secreted</keyword>
<sequence>GASGLIAFPRL</sequence>
<accession>P86662</accession>
<feature type="peptide" id="PRO_0000395591" description="Periviscerokinin-2" evidence="4">
    <location>
        <begin position="1"/>
        <end position="11"/>
    </location>
</feature>
<feature type="modified residue" description="Leucine amide" evidence="4">
    <location>
        <position position="11"/>
    </location>
</feature>
<feature type="unsure residue" description="L or I" evidence="4">
    <location>
        <position position="5"/>
    </location>
</feature>
<feature type="unsure residue" description="I or L" evidence="4">
    <location>
        <position position="6"/>
    </location>
</feature>
<feature type="unsure residue" description="L or I" evidence="4">
    <location>
        <position position="11"/>
    </location>
</feature>
<evidence type="ECO:0000250" key="1">
    <source>
        <dbReference type="UniProtKB" id="P83923"/>
    </source>
</evidence>
<evidence type="ECO:0000250" key="2">
    <source>
        <dbReference type="UniProtKB" id="P84375"/>
    </source>
</evidence>
<evidence type="ECO:0000255" key="3"/>
<evidence type="ECO:0000269" key="4">
    <source>
    </source>
</evidence>
<evidence type="ECO:0000303" key="5">
    <source>
    </source>
</evidence>
<evidence type="ECO:0000305" key="6"/>
<reference evidence="6" key="1">
    <citation type="journal article" date="2010" name="Peptides">
        <title>CAPA-peptides of praying mantids (Mantodea).</title>
        <authorList>
            <person name="Koehler R."/>
            <person name="Predel R."/>
        </authorList>
    </citation>
    <scope>PROTEIN SEQUENCE</scope>
    <scope>MASS SPECTROMETRY</scope>
    <scope>AMIDATION AT LEU-11</scope>
    <source>
        <tissue evidence="4">Abdominal perisympathetic organs</tissue>
    </source>
</reference>
<comment type="function">
    <text evidence="1">Mediates visceral muscle contractile activity (myotropic activity).</text>
</comment>
<comment type="subcellular location">
    <subcellularLocation>
        <location evidence="2">Secreted</location>
    </subcellularLocation>
</comment>
<comment type="mass spectrometry"/>
<comment type="similarity">
    <text evidence="3">Belongs to the periviscerokinin family.</text>
</comment>
<protein>
    <recommendedName>
        <fullName evidence="5">Periviscerokinin-2</fullName>
    </recommendedName>
</protein>
<organism>
    <name type="scientific">Miomantis paykullii</name>
    <name type="common">Egyptian praying mantis</name>
    <dbReference type="NCBI Taxonomy" id="627754"/>
    <lineage>
        <taxon>Eukaryota</taxon>
        <taxon>Metazoa</taxon>
        <taxon>Ecdysozoa</taxon>
        <taxon>Arthropoda</taxon>
        <taxon>Hexapoda</taxon>
        <taxon>Insecta</taxon>
        <taxon>Pterygota</taxon>
        <taxon>Neoptera</taxon>
        <taxon>Polyneoptera</taxon>
        <taxon>Dictyoptera</taxon>
        <taxon>Mantodea</taxon>
        <taxon>Eumantodea</taxon>
        <taxon>Mantoidea</taxon>
        <taxon>Mantidae</taxon>
        <taxon>Miomantinae</taxon>
        <taxon>Miomantini</taxon>
    </lineage>
</organism>
<name>PVK2_MIOPA</name>
<dbReference type="GO" id="GO:0005576">
    <property type="term" value="C:extracellular region"/>
    <property type="evidence" value="ECO:0007669"/>
    <property type="project" value="UniProtKB-SubCell"/>
</dbReference>
<dbReference type="GO" id="GO:0007218">
    <property type="term" value="P:neuropeptide signaling pathway"/>
    <property type="evidence" value="ECO:0007669"/>
    <property type="project" value="UniProtKB-KW"/>
</dbReference>
<dbReference type="InterPro" id="IPR013231">
    <property type="entry name" value="Periviscerokinin"/>
</dbReference>
<dbReference type="Pfam" id="PF08259">
    <property type="entry name" value="Periviscerokin"/>
    <property type="match status" value="1"/>
</dbReference>
<proteinExistence type="evidence at protein level"/>